<comment type="similarity">
    <text evidence="1">Belongs to the universal ribosomal protein uL16 family.</text>
</comment>
<keyword id="KW-0687">Ribonucleoprotein</keyword>
<keyword id="KW-0689">Ribosomal protein</keyword>
<sequence length="176" mass="19377">MVTKPARMYTRITGPAYTRKEFMGGVPYPKITTFVQGNQKRDFPIEMQLIAMESCQVRHTALEAARVSVNRRMTEAAGLDNFYLKVVPYPHHVLREHKMATGAGADRISSGMRAAFGRPVGTAARVYQNDVIMIGRTDEAHAHELKIALKKAAIKLPTPCKVVITKGKEIAGAIGV</sequence>
<accession>P58299</accession>
<evidence type="ECO:0000255" key="1">
    <source>
        <dbReference type="HAMAP-Rule" id="MF_00448"/>
    </source>
</evidence>
<evidence type="ECO:0000305" key="2"/>
<organism>
    <name type="scientific">Thermoplasma volcanium (strain ATCC 51530 / DSM 4299 / JCM 9571 / NBRC 15438 / GSS1)</name>
    <dbReference type="NCBI Taxonomy" id="273116"/>
    <lineage>
        <taxon>Archaea</taxon>
        <taxon>Methanobacteriati</taxon>
        <taxon>Thermoplasmatota</taxon>
        <taxon>Thermoplasmata</taxon>
        <taxon>Thermoplasmatales</taxon>
        <taxon>Thermoplasmataceae</taxon>
        <taxon>Thermoplasma</taxon>
    </lineage>
</organism>
<reference key="1">
    <citation type="journal article" date="2000" name="Proc. Natl. Acad. Sci. U.S.A.">
        <title>Archaeal adaptation to higher temperatures revealed by genomic sequence of Thermoplasma volcanium.</title>
        <authorList>
            <person name="Kawashima T."/>
            <person name="Amano N."/>
            <person name="Koike H."/>
            <person name="Makino S."/>
            <person name="Higuchi S."/>
            <person name="Kawashima-Ohya Y."/>
            <person name="Watanabe K."/>
            <person name="Yamazaki M."/>
            <person name="Kanehori K."/>
            <person name="Kawamoto T."/>
            <person name="Nunoshiba T."/>
            <person name="Yamamoto Y."/>
            <person name="Aramaki H."/>
            <person name="Makino K."/>
            <person name="Suzuki M."/>
        </authorList>
    </citation>
    <scope>NUCLEOTIDE SEQUENCE [LARGE SCALE GENOMIC DNA]</scope>
    <source>
        <strain>ATCC 51530 / DSM 4299 / JCM 9571 / NBRC 15438 / GSS1</strain>
    </source>
</reference>
<name>RL10E_THEVO</name>
<proteinExistence type="inferred from homology"/>
<feature type="chain" id="PRO_0000147151" description="Large ribosomal subunit protein uL16">
    <location>
        <begin position="1"/>
        <end position="176"/>
    </location>
</feature>
<protein>
    <recommendedName>
        <fullName evidence="1">Large ribosomal subunit protein uL16</fullName>
    </recommendedName>
    <alternativeName>
        <fullName evidence="2">50S ribosomal protein L10e</fullName>
    </alternativeName>
</protein>
<dbReference type="EMBL" id="BA000011">
    <property type="protein sequence ID" value="BAB59681.1"/>
    <property type="molecule type" value="Genomic_DNA"/>
</dbReference>
<dbReference type="RefSeq" id="WP_010916797.1">
    <property type="nucleotide sequence ID" value="NC_002689.2"/>
</dbReference>
<dbReference type="SMR" id="P58299"/>
<dbReference type="STRING" id="273116.gene:9381324"/>
<dbReference type="PaxDb" id="273116-14324754"/>
<dbReference type="GeneID" id="1441055"/>
<dbReference type="KEGG" id="tvo:TVG0528148"/>
<dbReference type="eggNOG" id="arCOG04113">
    <property type="taxonomic scope" value="Archaea"/>
</dbReference>
<dbReference type="HOGENOM" id="CLU_084051_0_2_2"/>
<dbReference type="OrthoDB" id="30538at2157"/>
<dbReference type="PhylomeDB" id="P58299"/>
<dbReference type="Proteomes" id="UP000001017">
    <property type="component" value="Chromosome"/>
</dbReference>
<dbReference type="GO" id="GO:1990904">
    <property type="term" value="C:ribonucleoprotein complex"/>
    <property type="evidence" value="ECO:0007669"/>
    <property type="project" value="UniProtKB-KW"/>
</dbReference>
<dbReference type="GO" id="GO:0005840">
    <property type="term" value="C:ribosome"/>
    <property type="evidence" value="ECO:0007669"/>
    <property type="project" value="UniProtKB-KW"/>
</dbReference>
<dbReference type="GO" id="GO:0003735">
    <property type="term" value="F:structural constituent of ribosome"/>
    <property type="evidence" value="ECO:0007669"/>
    <property type="project" value="InterPro"/>
</dbReference>
<dbReference type="GO" id="GO:0006412">
    <property type="term" value="P:translation"/>
    <property type="evidence" value="ECO:0007669"/>
    <property type="project" value="UniProtKB-UniRule"/>
</dbReference>
<dbReference type="CDD" id="cd01433">
    <property type="entry name" value="Ribosomal_L16_L10e"/>
    <property type="match status" value="1"/>
</dbReference>
<dbReference type="Gene3D" id="3.90.1170.10">
    <property type="entry name" value="Ribosomal protein L10e/L16"/>
    <property type="match status" value="1"/>
</dbReference>
<dbReference type="HAMAP" id="MF_00448">
    <property type="entry name" value="Ribosomal_uL16_arch"/>
    <property type="match status" value="1"/>
</dbReference>
<dbReference type="InterPro" id="IPR047873">
    <property type="entry name" value="Ribosomal_uL16"/>
</dbReference>
<dbReference type="InterPro" id="IPR022981">
    <property type="entry name" value="Ribosomal_uL16_arc"/>
</dbReference>
<dbReference type="InterPro" id="IPR018255">
    <property type="entry name" value="Ribosomal_uL16_CS_euk_arc"/>
</dbReference>
<dbReference type="InterPro" id="IPR016180">
    <property type="entry name" value="Ribosomal_uL16_dom"/>
</dbReference>
<dbReference type="InterPro" id="IPR001197">
    <property type="entry name" value="Ribosomal_uL16_euk_arch"/>
</dbReference>
<dbReference type="InterPro" id="IPR036920">
    <property type="entry name" value="Ribosomal_uL16_sf"/>
</dbReference>
<dbReference type="NCBIfam" id="NF003239">
    <property type="entry name" value="PRK04199.1-4"/>
    <property type="match status" value="1"/>
</dbReference>
<dbReference type="PANTHER" id="PTHR11726">
    <property type="entry name" value="60S RIBOSOMAL PROTEIN L10"/>
    <property type="match status" value="1"/>
</dbReference>
<dbReference type="Pfam" id="PF00252">
    <property type="entry name" value="Ribosomal_L16"/>
    <property type="match status" value="1"/>
</dbReference>
<dbReference type="PIRSF" id="PIRSF005590">
    <property type="entry name" value="Ribosomal_L10"/>
    <property type="match status" value="1"/>
</dbReference>
<dbReference type="SUPFAM" id="SSF54686">
    <property type="entry name" value="Ribosomal protein L16p/L10e"/>
    <property type="match status" value="1"/>
</dbReference>
<dbReference type="PROSITE" id="PS01257">
    <property type="entry name" value="RIBOSOMAL_L10E"/>
    <property type="match status" value="1"/>
</dbReference>
<gene>
    <name evidence="1" type="primary">rpl10e</name>
    <name type="ordered locus">TV0539</name>
    <name type="ORF">TVG0528148</name>
</gene>